<proteinExistence type="inferred from homology"/>
<gene>
    <name evidence="1" type="primary">guaAB</name>
    <name type="ordered locus">TK0193</name>
</gene>
<reference key="1">
    <citation type="journal article" date="2005" name="Genome Res.">
        <title>Complete genome sequence of the hyperthermophilic archaeon Thermococcus kodakaraensis KOD1 and comparison with Pyrococcus genomes.</title>
        <authorList>
            <person name="Fukui T."/>
            <person name="Atomi H."/>
            <person name="Kanai T."/>
            <person name="Matsumi R."/>
            <person name="Fujiwara S."/>
            <person name="Imanaka T."/>
        </authorList>
    </citation>
    <scope>NUCLEOTIDE SEQUENCE [LARGE SCALE GENOMIC DNA]</scope>
    <source>
        <strain>ATCC BAA-918 / JCM 12380 / KOD1</strain>
    </source>
</reference>
<feature type="chain" id="PRO_0000140250" description="GMP synthase [glutamine-hydrolyzing] subunit B">
    <location>
        <begin position="1"/>
        <end position="307"/>
    </location>
</feature>
<feature type="domain" description="GMPS ATP-PPase" evidence="1">
    <location>
        <begin position="1"/>
        <end position="184"/>
    </location>
</feature>
<feature type="binding site" evidence="1">
    <location>
        <begin position="27"/>
        <end position="33"/>
    </location>
    <ligand>
        <name>ATP</name>
        <dbReference type="ChEBI" id="CHEBI:30616"/>
    </ligand>
</feature>
<evidence type="ECO:0000255" key="1">
    <source>
        <dbReference type="HAMAP-Rule" id="MF_00345"/>
    </source>
</evidence>
<comment type="function">
    <text evidence="1">Catalyzes the synthesis of GMP from XMP.</text>
</comment>
<comment type="catalytic activity">
    <reaction evidence="1">
        <text>XMP + L-glutamine + ATP + H2O = GMP + L-glutamate + AMP + diphosphate + 2 H(+)</text>
        <dbReference type="Rhea" id="RHEA:11680"/>
        <dbReference type="ChEBI" id="CHEBI:15377"/>
        <dbReference type="ChEBI" id="CHEBI:15378"/>
        <dbReference type="ChEBI" id="CHEBI:29985"/>
        <dbReference type="ChEBI" id="CHEBI:30616"/>
        <dbReference type="ChEBI" id="CHEBI:33019"/>
        <dbReference type="ChEBI" id="CHEBI:57464"/>
        <dbReference type="ChEBI" id="CHEBI:58115"/>
        <dbReference type="ChEBI" id="CHEBI:58359"/>
        <dbReference type="ChEBI" id="CHEBI:456215"/>
        <dbReference type="EC" id="6.3.5.2"/>
    </reaction>
</comment>
<comment type="pathway">
    <text evidence="1">Purine metabolism; GMP biosynthesis; GMP from XMP (L-Gln route): step 1/1.</text>
</comment>
<comment type="subunit">
    <text evidence="1">Heterodimer composed of a glutamine amidotransferase subunit (A) and a GMP-binding subunit (B).</text>
</comment>
<accession>Q5JFM1</accession>
<protein>
    <recommendedName>
        <fullName evidence="1">GMP synthase [glutamine-hydrolyzing] subunit B</fullName>
        <ecNumber evidence="1">6.3.5.2</ecNumber>
    </recommendedName>
    <alternativeName>
        <fullName evidence="1">GMP synthetase</fullName>
    </alternativeName>
</protein>
<sequence>MWENFIEEKVKEIRETVGDGKAIIALSGGVDSSTAAVLAHRAIGDRLHAVFVNTGFMRKGEPEFVVKTFRDEFGLNLHYVDASERFFRELKGVTDPEEKRKIIGRVFIEVFEEVAKEINADFLIQGTIAPDWIESHGKIKSHHNVGGLPERLNLKLIEPLRDLYKDEVRELAKELGLPEKIYNRMPFPGPGLAVRVLGEVTPERVAIVREANAIVEEEIEKAGLKPWQAFAVLLGVKTVGVQGDIRAYKETVAVRVVESLDGMTANAMNVPWEVLQRIAFRITSEIPEVGRVLYDITNKPPATIEFE</sequence>
<organism>
    <name type="scientific">Thermococcus kodakarensis (strain ATCC BAA-918 / JCM 12380 / KOD1)</name>
    <name type="common">Pyrococcus kodakaraensis (strain KOD1)</name>
    <dbReference type="NCBI Taxonomy" id="69014"/>
    <lineage>
        <taxon>Archaea</taxon>
        <taxon>Methanobacteriati</taxon>
        <taxon>Methanobacteriota</taxon>
        <taxon>Thermococci</taxon>
        <taxon>Thermococcales</taxon>
        <taxon>Thermococcaceae</taxon>
        <taxon>Thermococcus</taxon>
    </lineage>
</organism>
<keyword id="KW-0067">ATP-binding</keyword>
<keyword id="KW-0332">GMP biosynthesis</keyword>
<keyword id="KW-0436">Ligase</keyword>
<keyword id="KW-0547">Nucleotide-binding</keyword>
<keyword id="KW-0658">Purine biosynthesis</keyword>
<keyword id="KW-1185">Reference proteome</keyword>
<dbReference type="EC" id="6.3.5.2" evidence="1"/>
<dbReference type="EMBL" id="AP006878">
    <property type="protein sequence ID" value="BAD84382.1"/>
    <property type="molecule type" value="Genomic_DNA"/>
</dbReference>
<dbReference type="RefSeq" id="WP_011249148.1">
    <property type="nucleotide sequence ID" value="NC_006624.1"/>
</dbReference>
<dbReference type="SMR" id="Q5JFM1"/>
<dbReference type="FunCoup" id="Q5JFM1">
    <property type="interactions" value="190"/>
</dbReference>
<dbReference type="IntAct" id="Q5JFM1">
    <property type="interactions" value="1"/>
</dbReference>
<dbReference type="MINT" id="Q5JFM1"/>
<dbReference type="STRING" id="69014.TK0193"/>
<dbReference type="EnsemblBacteria" id="BAD84382">
    <property type="protein sequence ID" value="BAD84382"/>
    <property type="gene ID" value="TK0193"/>
</dbReference>
<dbReference type="GeneID" id="78446697"/>
<dbReference type="KEGG" id="tko:TK0193"/>
<dbReference type="PATRIC" id="fig|69014.16.peg.192"/>
<dbReference type="eggNOG" id="arCOG00085">
    <property type="taxonomic scope" value="Archaea"/>
</dbReference>
<dbReference type="HOGENOM" id="CLU_014340_0_0_2"/>
<dbReference type="InParanoid" id="Q5JFM1"/>
<dbReference type="OrthoDB" id="33844at2157"/>
<dbReference type="PhylomeDB" id="Q5JFM1"/>
<dbReference type="UniPathway" id="UPA00189">
    <property type="reaction ID" value="UER00296"/>
</dbReference>
<dbReference type="Proteomes" id="UP000000536">
    <property type="component" value="Chromosome"/>
</dbReference>
<dbReference type="GO" id="GO:0005829">
    <property type="term" value="C:cytosol"/>
    <property type="evidence" value="ECO:0000318"/>
    <property type="project" value="GO_Central"/>
</dbReference>
<dbReference type="GO" id="GO:0005524">
    <property type="term" value="F:ATP binding"/>
    <property type="evidence" value="ECO:0007669"/>
    <property type="project" value="UniProtKB-UniRule"/>
</dbReference>
<dbReference type="GO" id="GO:0003921">
    <property type="term" value="F:GMP synthase activity"/>
    <property type="evidence" value="ECO:0000318"/>
    <property type="project" value="GO_Central"/>
</dbReference>
<dbReference type="GO" id="GO:0006177">
    <property type="term" value="P:GMP biosynthetic process"/>
    <property type="evidence" value="ECO:0000318"/>
    <property type="project" value="GO_Central"/>
</dbReference>
<dbReference type="CDD" id="cd01997">
    <property type="entry name" value="GMP_synthase_C"/>
    <property type="match status" value="1"/>
</dbReference>
<dbReference type="FunFam" id="3.30.300.10:FF:000002">
    <property type="entry name" value="GMP synthase [glutamine-hydrolyzing]"/>
    <property type="match status" value="1"/>
</dbReference>
<dbReference type="FunFam" id="3.40.50.620:FF:000208">
    <property type="entry name" value="GMP synthase [glutamine-hydrolyzing] subunit B"/>
    <property type="match status" value="1"/>
</dbReference>
<dbReference type="Gene3D" id="3.30.300.10">
    <property type="match status" value="1"/>
</dbReference>
<dbReference type="Gene3D" id="3.40.50.620">
    <property type="entry name" value="HUPs"/>
    <property type="match status" value="1"/>
</dbReference>
<dbReference type="HAMAP" id="MF_00345">
    <property type="entry name" value="GMP_synthase_B"/>
    <property type="match status" value="1"/>
</dbReference>
<dbReference type="InterPro" id="IPR001674">
    <property type="entry name" value="GMP_synth_C"/>
</dbReference>
<dbReference type="InterPro" id="IPR026598">
    <property type="entry name" value="GMP_synthase_B"/>
</dbReference>
<dbReference type="InterPro" id="IPR025777">
    <property type="entry name" value="GMPS_ATP_PPase_dom"/>
</dbReference>
<dbReference type="InterPro" id="IPR022310">
    <property type="entry name" value="NAD/GMP_synthase"/>
</dbReference>
<dbReference type="InterPro" id="IPR014729">
    <property type="entry name" value="Rossmann-like_a/b/a_fold"/>
</dbReference>
<dbReference type="NCBIfam" id="TIGR00884">
    <property type="entry name" value="guaA_Cterm"/>
    <property type="match status" value="1"/>
</dbReference>
<dbReference type="NCBIfam" id="NF000848">
    <property type="entry name" value="PRK00074.1"/>
    <property type="match status" value="1"/>
</dbReference>
<dbReference type="PANTHER" id="PTHR11922:SF2">
    <property type="entry name" value="GMP SYNTHASE [GLUTAMINE-HYDROLYZING]"/>
    <property type="match status" value="1"/>
</dbReference>
<dbReference type="PANTHER" id="PTHR11922">
    <property type="entry name" value="GMP SYNTHASE-RELATED"/>
    <property type="match status" value="1"/>
</dbReference>
<dbReference type="Pfam" id="PF00958">
    <property type="entry name" value="GMP_synt_C"/>
    <property type="match status" value="1"/>
</dbReference>
<dbReference type="Pfam" id="PF02540">
    <property type="entry name" value="NAD_synthase"/>
    <property type="match status" value="2"/>
</dbReference>
<dbReference type="SUPFAM" id="SSF52402">
    <property type="entry name" value="Adenine nucleotide alpha hydrolases-like"/>
    <property type="match status" value="1"/>
</dbReference>
<dbReference type="SUPFAM" id="SSF54810">
    <property type="entry name" value="GMP synthetase C-terminal dimerisation domain"/>
    <property type="match status" value="1"/>
</dbReference>
<dbReference type="PROSITE" id="PS51553">
    <property type="entry name" value="GMPS_ATP_PPASE"/>
    <property type="match status" value="1"/>
</dbReference>
<name>GUAAB_THEKO</name>